<evidence type="ECO:0000255" key="1">
    <source>
        <dbReference type="HAMAP-Rule" id="MF_00376"/>
    </source>
</evidence>
<name>COAE_LISIN</name>
<sequence>MGKTIGLTGSVATGKSTVSNLIQQAGIPLVDADIAARKVVEKGTDGLAEIVAYFGKDILLEDGTLNRAKLGEIIFQDKEKREKLNEITHPRVKDYMLNERERFFEAGEKVVFFDIPLLFESHLESLVDQIIVVWTTPETELKRLMERNNLTKEEALARINSQMGIDEKAKKADFVIDNNESLEKTQKQVLTFIERFVNNK</sequence>
<proteinExistence type="inferred from homology"/>
<keyword id="KW-0067">ATP-binding</keyword>
<keyword id="KW-0173">Coenzyme A biosynthesis</keyword>
<keyword id="KW-0963">Cytoplasm</keyword>
<keyword id="KW-0418">Kinase</keyword>
<keyword id="KW-0547">Nucleotide-binding</keyword>
<keyword id="KW-0808">Transferase</keyword>
<gene>
    <name evidence="1" type="primary">coaE</name>
    <name type="ordered locus">lin1598</name>
</gene>
<comment type="function">
    <text evidence="1">Catalyzes the phosphorylation of the 3'-hydroxyl group of dephosphocoenzyme A to form coenzyme A.</text>
</comment>
<comment type="catalytic activity">
    <reaction evidence="1">
        <text>3'-dephospho-CoA + ATP = ADP + CoA + H(+)</text>
        <dbReference type="Rhea" id="RHEA:18245"/>
        <dbReference type="ChEBI" id="CHEBI:15378"/>
        <dbReference type="ChEBI" id="CHEBI:30616"/>
        <dbReference type="ChEBI" id="CHEBI:57287"/>
        <dbReference type="ChEBI" id="CHEBI:57328"/>
        <dbReference type="ChEBI" id="CHEBI:456216"/>
        <dbReference type="EC" id="2.7.1.24"/>
    </reaction>
</comment>
<comment type="pathway">
    <text evidence="1">Cofactor biosynthesis; coenzyme A biosynthesis; CoA from (R)-pantothenate: step 5/5.</text>
</comment>
<comment type="subcellular location">
    <subcellularLocation>
        <location evidence="1">Cytoplasm</location>
    </subcellularLocation>
</comment>
<comment type="similarity">
    <text evidence="1">Belongs to the CoaE family.</text>
</comment>
<accession>Q92BF2</accession>
<reference key="1">
    <citation type="journal article" date="2001" name="Science">
        <title>Comparative genomics of Listeria species.</title>
        <authorList>
            <person name="Glaser P."/>
            <person name="Frangeul L."/>
            <person name="Buchrieser C."/>
            <person name="Rusniok C."/>
            <person name="Amend A."/>
            <person name="Baquero F."/>
            <person name="Berche P."/>
            <person name="Bloecker H."/>
            <person name="Brandt P."/>
            <person name="Chakraborty T."/>
            <person name="Charbit A."/>
            <person name="Chetouani F."/>
            <person name="Couve E."/>
            <person name="de Daruvar A."/>
            <person name="Dehoux P."/>
            <person name="Domann E."/>
            <person name="Dominguez-Bernal G."/>
            <person name="Duchaud E."/>
            <person name="Durant L."/>
            <person name="Dussurget O."/>
            <person name="Entian K.-D."/>
            <person name="Fsihi H."/>
            <person name="Garcia-del Portillo F."/>
            <person name="Garrido P."/>
            <person name="Gautier L."/>
            <person name="Goebel W."/>
            <person name="Gomez-Lopez N."/>
            <person name="Hain T."/>
            <person name="Hauf J."/>
            <person name="Jackson D."/>
            <person name="Jones L.-M."/>
            <person name="Kaerst U."/>
            <person name="Kreft J."/>
            <person name="Kuhn M."/>
            <person name="Kunst F."/>
            <person name="Kurapkat G."/>
            <person name="Madueno E."/>
            <person name="Maitournam A."/>
            <person name="Mata Vicente J."/>
            <person name="Ng E."/>
            <person name="Nedjari H."/>
            <person name="Nordsiek G."/>
            <person name="Novella S."/>
            <person name="de Pablos B."/>
            <person name="Perez-Diaz J.-C."/>
            <person name="Purcell R."/>
            <person name="Remmel B."/>
            <person name="Rose M."/>
            <person name="Schlueter T."/>
            <person name="Simoes N."/>
            <person name="Tierrez A."/>
            <person name="Vazquez-Boland J.-A."/>
            <person name="Voss H."/>
            <person name="Wehland J."/>
            <person name="Cossart P."/>
        </authorList>
    </citation>
    <scope>NUCLEOTIDE SEQUENCE [LARGE SCALE GENOMIC DNA]</scope>
    <source>
        <strain>ATCC BAA-680 / CLIP 11262</strain>
    </source>
</reference>
<feature type="chain" id="PRO_0000172957" description="Dephospho-CoA kinase">
    <location>
        <begin position="1"/>
        <end position="200"/>
    </location>
</feature>
<feature type="domain" description="DPCK" evidence="1">
    <location>
        <begin position="4"/>
        <end position="200"/>
    </location>
</feature>
<feature type="binding site" evidence="1">
    <location>
        <begin position="12"/>
        <end position="17"/>
    </location>
    <ligand>
        <name>ATP</name>
        <dbReference type="ChEBI" id="CHEBI:30616"/>
    </ligand>
</feature>
<organism>
    <name type="scientific">Listeria innocua serovar 6a (strain ATCC BAA-680 / CLIP 11262)</name>
    <dbReference type="NCBI Taxonomy" id="272626"/>
    <lineage>
        <taxon>Bacteria</taxon>
        <taxon>Bacillati</taxon>
        <taxon>Bacillota</taxon>
        <taxon>Bacilli</taxon>
        <taxon>Bacillales</taxon>
        <taxon>Listeriaceae</taxon>
        <taxon>Listeria</taxon>
    </lineage>
</organism>
<dbReference type="EC" id="2.7.1.24" evidence="1"/>
<dbReference type="EMBL" id="AL596169">
    <property type="protein sequence ID" value="CAC96829.1"/>
    <property type="molecule type" value="Genomic_DNA"/>
</dbReference>
<dbReference type="PIR" id="AE1632">
    <property type="entry name" value="AE1632"/>
</dbReference>
<dbReference type="RefSeq" id="WP_010991605.1">
    <property type="nucleotide sequence ID" value="NC_003212.1"/>
</dbReference>
<dbReference type="SMR" id="Q92BF2"/>
<dbReference type="STRING" id="272626.gene:17565929"/>
<dbReference type="KEGG" id="lin:lin1598"/>
<dbReference type="eggNOG" id="COG0237">
    <property type="taxonomic scope" value="Bacteria"/>
</dbReference>
<dbReference type="HOGENOM" id="CLU_057180_0_0_9"/>
<dbReference type="OrthoDB" id="9812943at2"/>
<dbReference type="UniPathway" id="UPA00241">
    <property type="reaction ID" value="UER00356"/>
</dbReference>
<dbReference type="Proteomes" id="UP000002513">
    <property type="component" value="Chromosome"/>
</dbReference>
<dbReference type="GO" id="GO:0005737">
    <property type="term" value="C:cytoplasm"/>
    <property type="evidence" value="ECO:0007669"/>
    <property type="project" value="UniProtKB-SubCell"/>
</dbReference>
<dbReference type="GO" id="GO:0005524">
    <property type="term" value="F:ATP binding"/>
    <property type="evidence" value="ECO:0007669"/>
    <property type="project" value="UniProtKB-UniRule"/>
</dbReference>
<dbReference type="GO" id="GO:0004140">
    <property type="term" value="F:dephospho-CoA kinase activity"/>
    <property type="evidence" value="ECO:0007669"/>
    <property type="project" value="UniProtKB-UniRule"/>
</dbReference>
<dbReference type="GO" id="GO:0015937">
    <property type="term" value="P:coenzyme A biosynthetic process"/>
    <property type="evidence" value="ECO:0007669"/>
    <property type="project" value="UniProtKB-UniRule"/>
</dbReference>
<dbReference type="CDD" id="cd02022">
    <property type="entry name" value="DPCK"/>
    <property type="match status" value="1"/>
</dbReference>
<dbReference type="FunFam" id="3.40.50.300:FF:000991">
    <property type="entry name" value="Dephospho-CoA kinase"/>
    <property type="match status" value="1"/>
</dbReference>
<dbReference type="Gene3D" id="3.40.50.300">
    <property type="entry name" value="P-loop containing nucleotide triphosphate hydrolases"/>
    <property type="match status" value="1"/>
</dbReference>
<dbReference type="HAMAP" id="MF_00376">
    <property type="entry name" value="Dephospho_CoA_kinase"/>
    <property type="match status" value="1"/>
</dbReference>
<dbReference type="InterPro" id="IPR001977">
    <property type="entry name" value="Depp_CoAkinase"/>
</dbReference>
<dbReference type="InterPro" id="IPR027417">
    <property type="entry name" value="P-loop_NTPase"/>
</dbReference>
<dbReference type="NCBIfam" id="TIGR00152">
    <property type="entry name" value="dephospho-CoA kinase"/>
    <property type="match status" value="1"/>
</dbReference>
<dbReference type="PANTHER" id="PTHR10695:SF46">
    <property type="entry name" value="BIFUNCTIONAL COENZYME A SYNTHASE-RELATED"/>
    <property type="match status" value="1"/>
</dbReference>
<dbReference type="PANTHER" id="PTHR10695">
    <property type="entry name" value="DEPHOSPHO-COA KINASE-RELATED"/>
    <property type="match status" value="1"/>
</dbReference>
<dbReference type="Pfam" id="PF01121">
    <property type="entry name" value="CoaE"/>
    <property type="match status" value="1"/>
</dbReference>
<dbReference type="SUPFAM" id="SSF52540">
    <property type="entry name" value="P-loop containing nucleoside triphosphate hydrolases"/>
    <property type="match status" value="1"/>
</dbReference>
<dbReference type="PROSITE" id="PS51219">
    <property type="entry name" value="DPCK"/>
    <property type="match status" value="1"/>
</dbReference>
<protein>
    <recommendedName>
        <fullName evidence="1">Dephospho-CoA kinase</fullName>
        <ecNumber evidence="1">2.7.1.24</ecNumber>
    </recommendedName>
    <alternativeName>
        <fullName evidence="1">Dephosphocoenzyme A kinase</fullName>
    </alternativeName>
</protein>